<feature type="chain" id="PRO_1000147750" description="N(4)-acetylcytidine amidohydrolase">
    <location>
        <begin position="1"/>
        <end position="103"/>
    </location>
</feature>
<feature type="domain" description="ASCH" evidence="1">
    <location>
        <begin position="6"/>
        <end position="101"/>
    </location>
</feature>
<feature type="active site" description="Proton acceptor" evidence="2">
    <location>
        <position position="21"/>
    </location>
</feature>
<feature type="active site" description="Nucleophile" evidence="2">
    <location>
        <position position="24"/>
    </location>
</feature>
<feature type="active site" description="Proton donor" evidence="2">
    <location>
        <position position="74"/>
    </location>
</feature>
<protein>
    <recommendedName>
        <fullName evidence="2">N(4)-acetylcytidine amidohydrolase</fullName>
        <shortName evidence="2">ac4C amidohydrolase</shortName>
        <ecNumber evidence="2">3.5.1.135</ecNumber>
    </recommendedName>
</protein>
<comment type="function">
    <text evidence="2">Catalyzes the hydrolysis of N(4)-acetylcytidine (ac4C).</text>
</comment>
<comment type="catalytic activity">
    <reaction evidence="2">
        <text>N(4)-acetylcytidine + H2O = cytidine + acetate + H(+)</text>
        <dbReference type="Rhea" id="RHEA:62932"/>
        <dbReference type="ChEBI" id="CHEBI:15377"/>
        <dbReference type="ChEBI" id="CHEBI:15378"/>
        <dbReference type="ChEBI" id="CHEBI:17562"/>
        <dbReference type="ChEBI" id="CHEBI:30089"/>
        <dbReference type="ChEBI" id="CHEBI:70989"/>
        <dbReference type="EC" id="3.5.1.135"/>
    </reaction>
</comment>
<comment type="catalytic activity">
    <reaction evidence="2">
        <text>N(4)-acetyl-2'-deoxycytidine + H2O = 2'-deoxycytidine + acetate + H(+)</text>
        <dbReference type="Rhea" id="RHEA:62936"/>
        <dbReference type="ChEBI" id="CHEBI:15377"/>
        <dbReference type="ChEBI" id="CHEBI:15378"/>
        <dbReference type="ChEBI" id="CHEBI:15698"/>
        <dbReference type="ChEBI" id="CHEBI:30089"/>
        <dbReference type="ChEBI" id="CHEBI:146133"/>
        <dbReference type="EC" id="3.5.1.135"/>
    </reaction>
</comment>
<comment type="catalytic activity">
    <reaction evidence="2">
        <text>N(4)-acetylcytosine + H2O = cytosine + acetate + H(+)</text>
        <dbReference type="Rhea" id="RHEA:62940"/>
        <dbReference type="ChEBI" id="CHEBI:15377"/>
        <dbReference type="ChEBI" id="CHEBI:15378"/>
        <dbReference type="ChEBI" id="CHEBI:16040"/>
        <dbReference type="ChEBI" id="CHEBI:30089"/>
        <dbReference type="ChEBI" id="CHEBI:146134"/>
        <dbReference type="EC" id="3.5.1.135"/>
    </reaction>
</comment>
<comment type="similarity">
    <text evidence="2">Belongs to the N(4)-acetylcytidine amidohydrolase family.</text>
</comment>
<keyword id="KW-0378">Hydrolase</keyword>
<name>AC4CH_ECO81</name>
<dbReference type="EC" id="3.5.1.135" evidence="2"/>
<dbReference type="EMBL" id="CU928162">
    <property type="protein sequence ID" value="CAR09516.2"/>
    <property type="molecule type" value="Genomic_DNA"/>
</dbReference>
<dbReference type="RefSeq" id="WP_001182956.1">
    <property type="nucleotide sequence ID" value="NC_011745.1"/>
</dbReference>
<dbReference type="SMR" id="B7MZJ8"/>
<dbReference type="KEGG" id="ecq:ECED1_3359"/>
<dbReference type="HOGENOM" id="CLU_152586_0_0_6"/>
<dbReference type="Proteomes" id="UP000000748">
    <property type="component" value="Chromosome"/>
</dbReference>
<dbReference type="GO" id="GO:0005829">
    <property type="term" value="C:cytosol"/>
    <property type="evidence" value="ECO:0007669"/>
    <property type="project" value="TreeGrafter"/>
</dbReference>
<dbReference type="GO" id="GO:0016813">
    <property type="term" value="F:hydrolase activity, acting on carbon-nitrogen (but not peptide) bonds, in linear amidines"/>
    <property type="evidence" value="ECO:0007669"/>
    <property type="project" value="UniProtKB-UniRule"/>
</dbReference>
<dbReference type="GO" id="GO:0106251">
    <property type="term" value="F:N4-acetylcytidine amidohydrolase activity"/>
    <property type="evidence" value="ECO:0007669"/>
    <property type="project" value="RHEA"/>
</dbReference>
<dbReference type="CDD" id="cd06552">
    <property type="entry name" value="ASCH_yqfb_like"/>
    <property type="match status" value="1"/>
</dbReference>
<dbReference type="FunFam" id="2.30.130.30:FF:000001">
    <property type="entry name" value="UPF0267 protein YqfB"/>
    <property type="match status" value="1"/>
</dbReference>
<dbReference type="Gene3D" id="2.30.130.30">
    <property type="entry name" value="Hypothetical protein"/>
    <property type="match status" value="1"/>
</dbReference>
<dbReference type="HAMAP" id="MF_00684">
    <property type="entry name" value="ac4C_amidohydr"/>
    <property type="match status" value="1"/>
</dbReference>
<dbReference type="InterPro" id="IPR008314">
    <property type="entry name" value="AC4CH"/>
</dbReference>
<dbReference type="InterPro" id="IPR007374">
    <property type="entry name" value="ASCH_domain"/>
</dbReference>
<dbReference type="InterPro" id="IPR015947">
    <property type="entry name" value="PUA-like_sf"/>
</dbReference>
<dbReference type="NCBIfam" id="NF003443">
    <property type="entry name" value="PRK04980.1"/>
    <property type="match status" value="1"/>
</dbReference>
<dbReference type="PANTHER" id="PTHR38088">
    <property type="entry name" value="UCP029143 FAMILY PROTEIN"/>
    <property type="match status" value="1"/>
</dbReference>
<dbReference type="PANTHER" id="PTHR38088:SF2">
    <property type="entry name" value="UCP029143 FAMILY PROTEIN"/>
    <property type="match status" value="1"/>
</dbReference>
<dbReference type="Pfam" id="PF04266">
    <property type="entry name" value="ASCH"/>
    <property type="match status" value="1"/>
</dbReference>
<dbReference type="PIRSF" id="PIRSF029143">
    <property type="entry name" value="UCP029143"/>
    <property type="match status" value="1"/>
</dbReference>
<dbReference type="SMART" id="SM01022">
    <property type="entry name" value="ASCH"/>
    <property type="match status" value="1"/>
</dbReference>
<dbReference type="SUPFAM" id="SSF88697">
    <property type="entry name" value="PUA domain-like"/>
    <property type="match status" value="1"/>
</dbReference>
<gene>
    <name type="primary">yqfB</name>
    <name type="ordered locus">ECED1_3359</name>
</gene>
<reference key="1">
    <citation type="journal article" date="2009" name="PLoS Genet.">
        <title>Organised genome dynamics in the Escherichia coli species results in highly diverse adaptive paths.</title>
        <authorList>
            <person name="Touchon M."/>
            <person name="Hoede C."/>
            <person name="Tenaillon O."/>
            <person name="Barbe V."/>
            <person name="Baeriswyl S."/>
            <person name="Bidet P."/>
            <person name="Bingen E."/>
            <person name="Bonacorsi S."/>
            <person name="Bouchier C."/>
            <person name="Bouvet O."/>
            <person name="Calteau A."/>
            <person name="Chiapello H."/>
            <person name="Clermont O."/>
            <person name="Cruveiller S."/>
            <person name="Danchin A."/>
            <person name="Diard M."/>
            <person name="Dossat C."/>
            <person name="Karoui M.E."/>
            <person name="Frapy E."/>
            <person name="Garry L."/>
            <person name="Ghigo J.M."/>
            <person name="Gilles A.M."/>
            <person name="Johnson J."/>
            <person name="Le Bouguenec C."/>
            <person name="Lescat M."/>
            <person name="Mangenot S."/>
            <person name="Martinez-Jehanne V."/>
            <person name="Matic I."/>
            <person name="Nassif X."/>
            <person name="Oztas S."/>
            <person name="Petit M.A."/>
            <person name="Pichon C."/>
            <person name="Rouy Z."/>
            <person name="Ruf C.S."/>
            <person name="Schneider D."/>
            <person name="Tourret J."/>
            <person name="Vacherie B."/>
            <person name="Vallenet D."/>
            <person name="Medigue C."/>
            <person name="Rocha E.P.C."/>
            <person name="Denamur E."/>
        </authorList>
    </citation>
    <scope>NUCLEOTIDE SEQUENCE [LARGE SCALE GENOMIC DNA]</scope>
    <source>
        <strain>ED1a</strain>
    </source>
</reference>
<accession>B7MZJ8</accession>
<organism>
    <name type="scientific">Escherichia coli O81 (strain ED1a)</name>
    <dbReference type="NCBI Taxonomy" id="585397"/>
    <lineage>
        <taxon>Bacteria</taxon>
        <taxon>Pseudomonadati</taxon>
        <taxon>Pseudomonadota</taxon>
        <taxon>Gammaproteobacteria</taxon>
        <taxon>Enterobacterales</taxon>
        <taxon>Enterobacteriaceae</taxon>
        <taxon>Escherichia</taxon>
    </lineage>
</organism>
<evidence type="ECO:0000255" key="1"/>
<evidence type="ECO:0000255" key="2">
    <source>
        <dbReference type="HAMAP-Rule" id="MF_00684"/>
    </source>
</evidence>
<proteinExistence type="inferred from homology"/>
<sequence length="103" mass="11963">MQPNDITFFQRFQDDILAGRKTITIRDESESHFKTGDVLRVGRFEDDGYFCTIEVTATSTVTLDTLTEKHAEQENMTLTELKKVIADIYPDQTQFYVIEFKCL</sequence>